<name>RS2_EXISA</name>
<protein>
    <recommendedName>
        <fullName evidence="1">Small ribosomal subunit protein uS2</fullName>
    </recommendedName>
    <alternativeName>
        <fullName evidence="2">30S ribosomal protein S2</fullName>
    </alternativeName>
</protein>
<evidence type="ECO:0000255" key="1">
    <source>
        <dbReference type="HAMAP-Rule" id="MF_00291"/>
    </source>
</evidence>
<evidence type="ECO:0000305" key="2"/>
<proteinExistence type="inferred from homology"/>
<reference key="1">
    <citation type="journal article" date="2011" name="J. Bacteriol.">
        <title>Complete genome sequence of the Thermophilic Bacterium Exiguobacterium sp. AT1b.</title>
        <authorList>
            <person name="Vishnivetskaya T.A."/>
            <person name="Lucas S."/>
            <person name="Copeland A."/>
            <person name="Lapidus A."/>
            <person name="Glavina del Rio T."/>
            <person name="Dalin E."/>
            <person name="Tice H."/>
            <person name="Bruce D.C."/>
            <person name="Goodwin L.A."/>
            <person name="Pitluck S."/>
            <person name="Saunders E."/>
            <person name="Brettin T."/>
            <person name="Detter C."/>
            <person name="Han C."/>
            <person name="Larimer F."/>
            <person name="Land M.L."/>
            <person name="Hauser L.J."/>
            <person name="Kyrpides N.C."/>
            <person name="Ovchinnikova G."/>
            <person name="Kathariou S."/>
            <person name="Ramaley R.F."/>
            <person name="Rodrigues D.F."/>
            <person name="Hendrix C."/>
            <person name="Richardson P."/>
            <person name="Tiedje J.M."/>
        </authorList>
    </citation>
    <scope>NUCLEOTIDE SEQUENCE [LARGE SCALE GENOMIC DNA]</scope>
    <source>
        <strain>ATCC BAA-1283 / AT1b</strain>
    </source>
</reference>
<feature type="chain" id="PRO_1000204883" description="Small ribosomal subunit protein uS2">
    <location>
        <begin position="1"/>
        <end position="246"/>
    </location>
</feature>
<gene>
    <name evidence="1" type="primary">rpsB</name>
    <name type="ordered locus">EAT1b_2942</name>
</gene>
<sequence>MAVISMKQLLEAGVHFGHQTRRWNPKMAKYIFTERNGIYIIDLQKTVKKVDEAYNFVRELAAEGGNVLFVGTKKQAQDTIKEEAIRSGMFFINERWLGGTLTNFSTIKKRINRLKQLEKMEEDGTFEVLPKKEVIILKKEMTRLEKFLGGIKDMPGVPDALFIVDPRKERIAIAEAHKLNIPIVAIVDTNCDPDEIDYVIPANDDAIRAVKLLTSKMADAIIEAKQGEEEVAEEAVATEAEATEAE</sequence>
<dbReference type="EMBL" id="CP001615">
    <property type="protein sequence ID" value="ACQ71856.1"/>
    <property type="molecule type" value="Genomic_DNA"/>
</dbReference>
<dbReference type="RefSeq" id="WP_015881415.1">
    <property type="nucleotide sequence ID" value="NZ_MOEL01000013.1"/>
</dbReference>
<dbReference type="SMR" id="C4L650"/>
<dbReference type="STRING" id="360911.EAT1b_2942"/>
<dbReference type="GeneID" id="94372394"/>
<dbReference type="KEGG" id="eat:EAT1b_2942"/>
<dbReference type="eggNOG" id="COG0052">
    <property type="taxonomic scope" value="Bacteria"/>
</dbReference>
<dbReference type="HOGENOM" id="CLU_040318_1_2_9"/>
<dbReference type="OrthoDB" id="9808036at2"/>
<dbReference type="Proteomes" id="UP000000716">
    <property type="component" value="Chromosome"/>
</dbReference>
<dbReference type="GO" id="GO:0022627">
    <property type="term" value="C:cytosolic small ribosomal subunit"/>
    <property type="evidence" value="ECO:0007669"/>
    <property type="project" value="TreeGrafter"/>
</dbReference>
<dbReference type="GO" id="GO:0003735">
    <property type="term" value="F:structural constituent of ribosome"/>
    <property type="evidence" value="ECO:0007669"/>
    <property type="project" value="InterPro"/>
</dbReference>
<dbReference type="GO" id="GO:0006412">
    <property type="term" value="P:translation"/>
    <property type="evidence" value="ECO:0007669"/>
    <property type="project" value="UniProtKB-UniRule"/>
</dbReference>
<dbReference type="CDD" id="cd01425">
    <property type="entry name" value="RPS2"/>
    <property type="match status" value="1"/>
</dbReference>
<dbReference type="FunFam" id="1.10.287.610:FF:000001">
    <property type="entry name" value="30S ribosomal protein S2"/>
    <property type="match status" value="1"/>
</dbReference>
<dbReference type="Gene3D" id="3.40.50.10490">
    <property type="entry name" value="Glucose-6-phosphate isomerase like protein, domain 1"/>
    <property type="match status" value="1"/>
</dbReference>
<dbReference type="Gene3D" id="1.10.287.610">
    <property type="entry name" value="Helix hairpin bin"/>
    <property type="match status" value="1"/>
</dbReference>
<dbReference type="HAMAP" id="MF_00291_B">
    <property type="entry name" value="Ribosomal_uS2_B"/>
    <property type="match status" value="1"/>
</dbReference>
<dbReference type="InterPro" id="IPR001865">
    <property type="entry name" value="Ribosomal_uS2"/>
</dbReference>
<dbReference type="InterPro" id="IPR005706">
    <property type="entry name" value="Ribosomal_uS2_bac/mit/plastid"/>
</dbReference>
<dbReference type="InterPro" id="IPR018130">
    <property type="entry name" value="Ribosomal_uS2_CS"/>
</dbReference>
<dbReference type="InterPro" id="IPR023591">
    <property type="entry name" value="Ribosomal_uS2_flav_dom_sf"/>
</dbReference>
<dbReference type="NCBIfam" id="TIGR01011">
    <property type="entry name" value="rpsB_bact"/>
    <property type="match status" value="1"/>
</dbReference>
<dbReference type="PANTHER" id="PTHR12534">
    <property type="entry name" value="30S RIBOSOMAL PROTEIN S2 PROKARYOTIC AND ORGANELLAR"/>
    <property type="match status" value="1"/>
</dbReference>
<dbReference type="PANTHER" id="PTHR12534:SF0">
    <property type="entry name" value="SMALL RIBOSOMAL SUBUNIT PROTEIN US2M"/>
    <property type="match status" value="1"/>
</dbReference>
<dbReference type="Pfam" id="PF00318">
    <property type="entry name" value="Ribosomal_S2"/>
    <property type="match status" value="1"/>
</dbReference>
<dbReference type="PRINTS" id="PR00395">
    <property type="entry name" value="RIBOSOMALS2"/>
</dbReference>
<dbReference type="SUPFAM" id="SSF52313">
    <property type="entry name" value="Ribosomal protein S2"/>
    <property type="match status" value="1"/>
</dbReference>
<dbReference type="PROSITE" id="PS00962">
    <property type="entry name" value="RIBOSOMAL_S2_1"/>
    <property type="match status" value="1"/>
</dbReference>
<dbReference type="PROSITE" id="PS00963">
    <property type="entry name" value="RIBOSOMAL_S2_2"/>
    <property type="match status" value="1"/>
</dbReference>
<keyword id="KW-0687">Ribonucleoprotein</keyword>
<keyword id="KW-0689">Ribosomal protein</keyword>
<organism>
    <name type="scientific">Exiguobacterium sp. (strain ATCC BAA-1283 / AT1b)</name>
    <dbReference type="NCBI Taxonomy" id="360911"/>
    <lineage>
        <taxon>Bacteria</taxon>
        <taxon>Bacillati</taxon>
        <taxon>Bacillota</taxon>
        <taxon>Bacilli</taxon>
        <taxon>Bacillales</taxon>
        <taxon>Bacillales Family XII. Incertae Sedis</taxon>
        <taxon>Exiguobacterium</taxon>
    </lineage>
</organism>
<accession>C4L650</accession>
<comment type="similarity">
    <text evidence="1">Belongs to the universal ribosomal protein uS2 family.</text>
</comment>